<accession>Q3JZB4</accession>
<name>RS7_STRA1</name>
<comment type="function">
    <text evidence="1">One of the primary rRNA binding proteins, it binds directly to 16S rRNA where it nucleates assembly of the head domain of the 30S subunit. Is located at the subunit interface close to the decoding center, probably blocks exit of the E-site tRNA.</text>
</comment>
<comment type="subunit">
    <text evidence="1">Part of the 30S ribosomal subunit. Contacts proteins S9 and S11.</text>
</comment>
<comment type="similarity">
    <text evidence="1">Belongs to the universal ribosomal protein uS7 family.</text>
</comment>
<protein>
    <recommendedName>
        <fullName evidence="1">Small ribosomal subunit protein uS7</fullName>
    </recommendedName>
    <alternativeName>
        <fullName evidence="2">30S ribosomal protein S7</fullName>
    </alternativeName>
</protein>
<sequence>MSRKNQAPKREVLPDPLYNSKIVTRLINRVMLDGKRGTAATIVYDAFEAIKEATGTDALEVFETAMENIMPVLEVRARRVGGSNYQVPVEVRPERRTTLGLRWLVNASRARGEHTMKDRLAKEIMDAANNTGASVKKREDTHKMAEANRAFAHFRW</sequence>
<feature type="chain" id="PRO_0000226532" description="Small ribosomal subunit protein uS7">
    <location>
        <begin position="1"/>
        <end position="156"/>
    </location>
</feature>
<evidence type="ECO:0000255" key="1">
    <source>
        <dbReference type="HAMAP-Rule" id="MF_00480"/>
    </source>
</evidence>
<evidence type="ECO:0000305" key="2"/>
<gene>
    <name evidence="1" type="primary">rpsG</name>
    <name type="ordered locus">SAK_1792</name>
</gene>
<reference key="1">
    <citation type="journal article" date="2005" name="Proc. Natl. Acad. Sci. U.S.A.">
        <title>Genome analysis of multiple pathogenic isolates of Streptococcus agalactiae: implications for the microbial 'pan-genome'.</title>
        <authorList>
            <person name="Tettelin H."/>
            <person name="Masignani V."/>
            <person name="Cieslewicz M.J."/>
            <person name="Donati C."/>
            <person name="Medini D."/>
            <person name="Ward N.L."/>
            <person name="Angiuoli S.V."/>
            <person name="Crabtree J."/>
            <person name="Jones A.L."/>
            <person name="Durkin A.S."/>
            <person name="DeBoy R.T."/>
            <person name="Davidsen T.M."/>
            <person name="Mora M."/>
            <person name="Scarselli M."/>
            <person name="Margarit y Ros I."/>
            <person name="Peterson J.D."/>
            <person name="Hauser C.R."/>
            <person name="Sundaram J.P."/>
            <person name="Nelson W.C."/>
            <person name="Madupu R."/>
            <person name="Brinkac L.M."/>
            <person name="Dodson R.J."/>
            <person name="Rosovitz M.J."/>
            <person name="Sullivan S.A."/>
            <person name="Daugherty S.C."/>
            <person name="Haft D.H."/>
            <person name="Selengut J."/>
            <person name="Gwinn M.L."/>
            <person name="Zhou L."/>
            <person name="Zafar N."/>
            <person name="Khouri H."/>
            <person name="Radune D."/>
            <person name="Dimitrov G."/>
            <person name="Watkins K."/>
            <person name="O'Connor K.J."/>
            <person name="Smith S."/>
            <person name="Utterback T.R."/>
            <person name="White O."/>
            <person name="Rubens C.E."/>
            <person name="Grandi G."/>
            <person name="Madoff L.C."/>
            <person name="Kasper D.L."/>
            <person name="Telford J.L."/>
            <person name="Wessels M.R."/>
            <person name="Rappuoli R."/>
            <person name="Fraser C.M."/>
        </authorList>
    </citation>
    <scope>NUCLEOTIDE SEQUENCE [LARGE SCALE GENOMIC DNA]</scope>
    <source>
        <strain>ATCC 27591 / A909 / CDC SS700</strain>
    </source>
</reference>
<dbReference type="EMBL" id="CP000114">
    <property type="protein sequence ID" value="ABA44861.1"/>
    <property type="molecule type" value="Genomic_DNA"/>
</dbReference>
<dbReference type="RefSeq" id="WP_000087842.1">
    <property type="nucleotide sequence ID" value="NC_007432.1"/>
</dbReference>
<dbReference type="SMR" id="Q3JZB4"/>
<dbReference type="GeneID" id="66886608"/>
<dbReference type="KEGG" id="sak:SAK_1792"/>
<dbReference type="HOGENOM" id="CLU_072226_1_1_9"/>
<dbReference type="GO" id="GO:0015935">
    <property type="term" value="C:small ribosomal subunit"/>
    <property type="evidence" value="ECO:0007669"/>
    <property type="project" value="InterPro"/>
</dbReference>
<dbReference type="GO" id="GO:0019843">
    <property type="term" value="F:rRNA binding"/>
    <property type="evidence" value="ECO:0007669"/>
    <property type="project" value="UniProtKB-UniRule"/>
</dbReference>
<dbReference type="GO" id="GO:0003735">
    <property type="term" value="F:structural constituent of ribosome"/>
    <property type="evidence" value="ECO:0007669"/>
    <property type="project" value="InterPro"/>
</dbReference>
<dbReference type="GO" id="GO:0000049">
    <property type="term" value="F:tRNA binding"/>
    <property type="evidence" value="ECO:0007669"/>
    <property type="project" value="UniProtKB-UniRule"/>
</dbReference>
<dbReference type="GO" id="GO:0006412">
    <property type="term" value="P:translation"/>
    <property type="evidence" value="ECO:0007669"/>
    <property type="project" value="UniProtKB-UniRule"/>
</dbReference>
<dbReference type="CDD" id="cd14869">
    <property type="entry name" value="uS7_Bacteria"/>
    <property type="match status" value="1"/>
</dbReference>
<dbReference type="FunFam" id="1.10.455.10:FF:000001">
    <property type="entry name" value="30S ribosomal protein S7"/>
    <property type="match status" value="1"/>
</dbReference>
<dbReference type="Gene3D" id="1.10.455.10">
    <property type="entry name" value="Ribosomal protein S7 domain"/>
    <property type="match status" value="1"/>
</dbReference>
<dbReference type="HAMAP" id="MF_00480_B">
    <property type="entry name" value="Ribosomal_uS7_B"/>
    <property type="match status" value="1"/>
</dbReference>
<dbReference type="InterPro" id="IPR000235">
    <property type="entry name" value="Ribosomal_uS7"/>
</dbReference>
<dbReference type="InterPro" id="IPR005717">
    <property type="entry name" value="Ribosomal_uS7_bac/org-type"/>
</dbReference>
<dbReference type="InterPro" id="IPR020606">
    <property type="entry name" value="Ribosomal_uS7_CS"/>
</dbReference>
<dbReference type="InterPro" id="IPR023798">
    <property type="entry name" value="Ribosomal_uS7_dom"/>
</dbReference>
<dbReference type="InterPro" id="IPR036823">
    <property type="entry name" value="Ribosomal_uS7_dom_sf"/>
</dbReference>
<dbReference type="NCBIfam" id="TIGR01029">
    <property type="entry name" value="rpsG_bact"/>
    <property type="match status" value="1"/>
</dbReference>
<dbReference type="PANTHER" id="PTHR11205">
    <property type="entry name" value="RIBOSOMAL PROTEIN S7"/>
    <property type="match status" value="1"/>
</dbReference>
<dbReference type="Pfam" id="PF00177">
    <property type="entry name" value="Ribosomal_S7"/>
    <property type="match status" value="1"/>
</dbReference>
<dbReference type="PIRSF" id="PIRSF002122">
    <property type="entry name" value="RPS7p_RPS7a_RPS5e_RPS7o"/>
    <property type="match status" value="1"/>
</dbReference>
<dbReference type="SUPFAM" id="SSF47973">
    <property type="entry name" value="Ribosomal protein S7"/>
    <property type="match status" value="1"/>
</dbReference>
<dbReference type="PROSITE" id="PS00052">
    <property type="entry name" value="RIBOSOMAL_S7"/>
    <property type="match status" value="1"/>
</dbReference>
<proteinExistence type="inferred from homology"/>
<organism>
    <name type="scientific">Streptococcus agalactiae serotype Ia (strain ATCC 27591 / A909 / CDC SS700)</name>
    <dbReference type="NCBI Taxonomy" id="205921"/>
    <lineage>
        <taxon>Bacteria</taxon>
        <taxon>Bacillati</taxon>
        <taxon>Bacillota</taxon>
        <taxon>Bacilli</taxon>
        <taxon>Lactobacillales</taxon>
        <taxon>Streptococcaceae</taxon>
        <taxon>Streptococcus</taxon>
    </lineage>
</organism>
<keyword id="KW-0687">Ribonucleoprotein</keyword>
<keyword id="KW-0689">Ribosomal protein</keyword>
<keyword id="KW-0694">RNA-binding</keyword>
<keyword id="KW-0699">rRNA-binding</keyword>
<keyword id="KW-0820">tRNA-binding</keyword>